<accession>Q673U1</accession>
<accession>Q8BLP1</accession>
<accession>Q8C055</accession>
<comment type="function">
    <text evidence="1">Sulfotransferase that utilizes 3'-phospho-5'-adenylyl sulfate (PAPS) to catalyze the transfer of a sulfo group to an N-unsubstituted glucosamine linked to a 2-O-sulfo iduronic acid unit on heparan sulfate (By similarity). Catalyzes the O-sulfation of glucosamine in GlcA2S-GlcNS (By similarity). Unlike HS3ST1/3-OST-1, does not convert non-anticoagulant heparan sulfate to anticoagulant heparan sulfate (By similarity).</text>
</comment>
<comment type="catalytic activity">
    <reaction evidence="1">
        <text>alpha-D-glucosaminyl-[heparan sulfate](n) + 3'-phosphoadenylyl sulfate = 3-sulfo-alpha-D-glucosaminyl-[heparan sulfate](n) + adenosine 3',5'-bisphosphate + H(+)</text>
        <dbReference type="Rhea" id="RHEA:15461"/>
        <dbReference type="Rhea" id="RHEA-COMP:9830"/>
        <dbReference type="Rhea" id="RHEA-COMP:9831"/>
        <dbReference type="ChEBI" id="CHEBI:15378"/>
        <dbReference type="ChEBI" id="CHEBI:58339"/>
        <dbReference type="ChEBI" id="CHEBI:58343"/>
        <dbReference type="ChEBI" id="CHEBI:58388"/>
        <dbReference type="ChEBI" id="CHEBI:70975"/>
        <dbReference type="EC" id="2.8.2.29"/>
    </reaction>
</comment>
<comment type="subcellular location">
    <subcellularLocation>
        <location evidence="6">Golgi apparatus membrane</location>
        <topology evidence="6">Single-pass type II membrane protein</topology>
    </subcellularLocation>
</comment>
<comment type="alternative products">
    <event type="alternative splicing"/>
    <isoform>
        <id>Q673U1-1</id>
        <name>1</name>
        <sequence type="displayed"/>
    </isoform>
    <isoform>
        <id>Q673U1-2</id>
        <name>2</name>
        <sequence type="described" ref="VSP_013179 VSP_013180 VSP_013181 VSP_013182"/>
    </isoform>
</comment>
<comment type="similarity">
    <text evidence="6">Belongs to the sulfotransferase 1 family.</text>
</comment>
<protein>
    <recommendedName>
        <fullName>Heparan sulfate glucosamine 3-O-sulfotransferase 2</fullName>
        <ecNumber evidence="1">2.8.2.29</ecNumber>
    </recommendedName>
    <alternativeName>
        <fullName>Heparan sulfate D-glucosaminyl 3-O-sulfotransferase 2</fullName>
        <shortName>Heparan sulfate 3-O-sulfotransferase 2</shortName>
    </alternativeName>
</protein>
<reference key="1">
    <citation type="journal article" date="2005" name="Science">
        <title>The transcriptional landscape of the mammalian genome.</title>
        <authorList>
            <person name="Carninci P."/>
            <person name="Kasukawa T."/>
            <person name="Katayama S."/>
            <person name="Gough J."/>
            <person name="Frith M.C."/>
            <person name="Maeda N."/>
            <person name="Oyama R."/>
            <person name="Ravasi T."/>
            <person name="Lenhard B."/>
            <person name="Wells C."/>
            <person name="Kodzius R."/>
            <person name="Shimokawa K."/>
            <person name="Bajic V.B."/>
            <person name="Brenner S.E."/>
            <person name="Batalov S."/>
            <person name="Forrest A.R."/>
            <person name="Zavolan M."/>
            <person name="Davis M.J."/>
            <person name="Wilming L.G."/>
            <person name="Aidinis V."/>
            <person name="Allen J.E."/>
            <person name="Ambesi-Impiombato A."/>
            <person name="Apweiler R."/>
            <person name="Aturaliya R.N."/>
            <person name="Bailey T.L."/>
            <person name="Bansal M."/>
            <person name="Baxter L."/>
            <person name="Beisel K.W."/>
            <person name="Bersano T."/>
            <person name="Bono H."/>
            <person name="Chalk A.M."/>
            <person name="Chiu K.P."/>
            <person name="Choudhary V."/>
            <person name="Christoffels A."/>
            <person name="Clutterbuck D.R."/>
            <person name="Crowe M.L."/>
            <person name="Dalla E."/>
            <person name="Dalrymple B.P."/>
            <person name="de Bono B."/>
            <person name="Della Gatta G."/>
            <person name="di Bernardo D."/>
            <person name="Down T."/>
            <person name="Engstrom P."/>
            <person name="Fagiolini M."/>
            <person name="Faulkner G."/>
            <person name="Fletcher C.F."/>
            <person name="Fukushima T."/>
            <person name="Furuno M."/>
            <person name="Futaki S."/>
            <person name="Gariboldi M."/>
            <person name="Georgii-Hemming P."/>
            <person name="Gingeras T.R."/>
            <person name="Gojobori T."/>
            <person name="Green R.E."/>
            <person name="Gustincich S."/>
            <person name="Harbers M."/>
            <person name="Hayashi Y."/>
            <person name="Hensch T.K."/>
            <person name="Hirokawa N."/>
            <person name="Hill D."/>
            <person name="Huminiecki L."/>
            <person name="Iacono M."/>
            <person name="Ikeo K."/>
            <person name="Iwama A."/>
            <person name="Ishikawa T."/>
            <person name="Jakt M."/>
            <person name="Kanapin A."/>
            <person name="Katoh M."/>
            <person name="Kawasawa Y."/>
            <person name="Kelso J."/>
            <person name="Kitamura H."/>
            <person name="Kitano H."/>
            <person name="Kollias G."/>
            <person name="Krishnan S.P."/>
            <person name="Kruger A."/>
            <person name="Kummerfeld S.K."/>
            <person name="Kurochkin I.V."/>
            <person name="Lareau L.F."/>
            <person name="Lazarevic D."/>
            <person name="Lipovich L."/>
            <person name="Liu J."/>
            <person name="Liuni S."/>
            <person name="McWilliam S."/>
            <person name="Madan Babu M."/>
            <person name="Madera M."/>
            <person name="Marchionni L."/>
            <person name="Matsuda H."/>
            <person name="Matsuzawa S."/>
            <person name="Miki H."/>
            <person name="Mignone F."/>
            <person name="Miyake S."/>
            <person name="Morris K."/>
            <person name="Mottagui-Tabar S."/>
            <person name="Mulder N."/>
            <person name="Nakano N."/>
            <person name="Nakauchi H."/>
            <person name="Ng P."/>
            <person name="Nilsson R."/>
            <person name="Nishiguchi S."/>
            <person name="Nishikawa S."/>
            <person name="Nori F."/>
            <person name="Ohara O."/>
            <person name="Okazaki Y."/>
            <person name="Orlando V."/>
            <person name="Pang K.C."/>
            <person name="Pavan W.J."/>
            <person name="Pavesi G."/>
            <person name="Pesole G."/>
            <person name="Petrovsky N."/>
            <person name="Piazza S."/>
            <person name="Reed J."/>
            <person name="Reid J.F."/>
            <person name="Ring B.Z."/>
            <person name="Ringwald M."/>
            <person name="Rost B."/>
            <person name="Ruan Y."/>
            <person name="Salzberg S.L."/>
            <person name="Sandelin A."/>
            <person name="Schneider C."/>
            <person name="Schoenbach C."/>
            <person name="Sekiguchi K."/>
            <person name="Semple C.A."/>
            <person name="Seno S."/>
            <person name="Sessa L."/>
            <person name="Sheng Y."/>
            <person name="Shibata Y."/>
            <person name="Shimada H."/>
            <person name="Shimada K."/>
            <person name="Silva D."/>
            <person name="Sinclair B."/>
            <person name="Sperling S."/>
            <person name="Stupka E."/>
            <person name="Sugiura K."/>
            <person name="Sultana R."/>
            <person name="Takenaka Y."/>
            <person name="Taki K."/>
            <person name="Tammoja K."/>
            <person name="Tan S.L."/>
            <person name="Tang S."/>
            <person name="Taylor M.S."/>
            <person name="Tegner J."/>
            <person name="Teichmann S.A."/>
            <person name="Ueda H.R."/>
            <person name="van Nimwegen E."/>
            <person name="Verardo R."/>
            <person name="Wei C.L."/>
            <person name="Yagi K."/>
            <person name="Yamanishi H."/>
            <person name="Zabarovsky E."/>
            <person name="Zhu S."/>
            <person name="Zimmer A."/>
            <person name="Hide W."/>
            <person name="Bult C."/>
            <person name="Grimmond S.M."/>
            <person name="Teasdale R.D."/>
            <person name="Liu E.T."/>
            <person name="Brusic V."/>
            <person name="Quackenbush J."/>
            <person name="Wahlestedt C."/>
            <person name="Mattick J.S."/>
            <person name="Hume D.A."/>
            <person name="Kai C."/>
            <person name="Sasaki D."/>
            <person name="Tomaru Y."/>
            <person name="Fukuda S."/>
            <person name="Kanamori-Katayama M."/>
            <person name="Suzuki M."/>
            <person name="Aoki J."/>
            <person name="Arakawa T."/>
            <person name="Iida J."/>
            <person name="Imamura K."/>
            <person name="Itoh M."/>
            <person name="Kato T."/>
            <person name="Kawaji H."/>
            <person name="Kawagashira N."/>
            <person name="Kawashima T."/>
            <person name="Kojima M."/>
            <person name="Kondo S."/>
            <person name="Konno H."/>
            <person name="Nakano K."/>
            <person name="Ninomiya N."/>
            <person name="Nishio T."/>
            <person name="Okada M."/>
            <person name="Plessy C."/>
            <person name="Shibata K."/>
            <person name="Shiraki T."/>
            <person name="Suzuki S."/>
            <person name="Tagami M."/>
            <person name="Waki K."/>
            <person name="Watahiki A."/>
            <person name="Okamura-Oho Y."/>
            <person name="Suzuki H."/>
            <person name="Kawai J."/>
            <person name="Hayashizaki Y."/>
        </authorList>
    </citation>
    <scope>NUCLEOTIDE SEQUENCE [LARGE SCALE MRNA] (ISOFORM 2)</scope>
    <scope>NUCLEOTIDE SEQUENCE [LARGE SCALE MRNA] OF 214-367 (ISOFORM 1)</scope>
    <source>
        <strain>C57BL/6J</strain>
        <tissue>Brain cortex</tissue>
        <tissue>Olfactory bulb</tissue>
    </source>
</reference>
<reference key="2">
    <citation type="journal article" date="2009" name="PLoS Biol.">
        <title>Lineage-specific biology revealed by a finished genome assembly of the mouse.</title>
        <authorList>
            <person name="Church D.M."/>
            <person name="Goodstadt L."/>
            <person name="Hillier L.W."/>
            <person name="Zody M.C."/>
            <person name="Goldstein S."/>
            <person name="She X."/>
            <person name="Bult C.J."/>
            <person name="Agarwala R."/>
            <person name="Cherry J.L."/>
            <person name="DiCuccio M."/>
            <person name="Hlavina W."/>
            <person name="Kapustin Y."/>
            <person name="Meric P."/>
            <person name="Maglott D."/>
            <person name="Birtle Z."/>
            <person name="Marques A.C."/>
            <person name="Graves T."/>
            <person name="Zhou S."/>
            <person name="Teague B."/>
            <person name="Potamousis K."/>
            <person name="Churas C."/>
            <person name="Place M."/>
            <person name="Herschleb J."/>
            <person name="Runnheim R."/>
            <person name="Forrest D."/>
            <person name="Amos-Landgraf J."/>
            <person name="Schwartz D.C."/>
            <person name="Cheng Z."/>
            <person name="Lindblad-Toh K."/>
            <person name="Eichler E.E."/>
            <person name="Ponting C.P."/>
        </authorList>
    </citation>
    <scope>NUCLEOTIDE SEQUENCE [LARGE SCALE GENOMIC DNA]</scope>
    <source>
        <strain>C57BL/6J</strain>
    </source>
</reference>
<reference key="3">
    <citation type="submission" date="2004-01" db="EMBL/GenBank/DDBJ databases">
        <title>Neuronal 3-O-sulfotransferases exhibit trigeminal ganglion expression, confer entry of HSV-1, and may explain disease patterns.</title>
        <authorList>
            <person name="Lawrence R."/>
            <person name="Yabe T."/>
            <person name="Hajmohammadi S."/>
            <person name="Rhodes J."/>
            <person name="McNeely M."/>
            <person name="Liu J."/>
            <person name="Lamperti E.D."/>
            <person name="Toselli P.A."/>
            <person name="Spear P.G."/>
            <person name="Rosenberg R.D."/>
            <person name="Shworak N.W."/>
        </authorList>
    </citation>
    <scope>NUCLEOTIDE SEQUENCE [MRNA] OF 40-324 (ISOFORM 1)</scope>
    <source>
        <strain>BALB/cJ</strain>
    </source>
</reference>
<gene>
    <name type="primary">Hs3st2</name>
    <name type="synonym">3ost2</name>
</gene>
<organism>
    <name type="scientific">Mus musculus</name>
    <name type="common">Mouse</name>
    <dbReference type="NCBI Taxonomy" id="10090"/>
    <lineage>
        <taxon>Eukaryota</taxon>
        <taxon>Metazoa</taxon>
        <taxon>Chordata</taxon>
        <taxon>Craniata</taxon>
        <taxon>Vertebrata</taxon>
        <taxon>Euteleostomi</taxon>
        <taxon>Mammalia</taxon>
        <taxon>Eutheria</taxon>
        <taxon>Euarchontoglires</taxon>
        <taxon>Glires</taxon>
        <taxon>Rodentia</taxon>
        <taxon>Myomorpha</taxon>
        <taxon>Muroidea</taxon>
        <taxon>Muridae</taxon>
        <taxon>Murinae</taxon>
        <taxon>Mus</taxon>
        <taxon>Mus</taxon>
    </lineage>
</organism>
<evidence type="ECO:0000250" key="1">
    <source>
        <dbReference type="UniProtKB" id="Q9Y278"/>
    </source>
</evidence>
<evidence type="ECO:0000250" key="2">
    <source>
        <dbReference type="UniProtKB" id="Q9Y663"/>
    </source>
</evidence>
<evidence type="ECO:0000255" key="3"/>
<evidence type="ECO:0000256" key="4">
    <source>
        <dbReference type="SAM" id="MobiDB-lite"/>
    </source>
</evidence>
<evidence type="ECO:0000303" key="5">
    <source>
    </source>
</evidence>
<evidence type="ECO:0000305" key="6"/>
<keyword id="KW-0025">Alternative splicing</keyword>
<keyword id="KW-1015">Disulfide bond</keyword>
<keyword id="KW-0325">Glycoprotein</keyword>
<keyword id="KW-0333">Golgi apparatus</keyword>
<keyword id="KW-0472">Membrane</keyword>
<keyword id="KW-1185">Reference proteome</keyword>
<keyword id="KW-0735">Signal-anchor</keyword>
<keyword id="KW-0808">Transferase</keyword>
<keyword id="KW-0812">Transmembrane</keyword>
<keyword id="KW-1133">Transmembrane helix</keyword>
<dbReference type="EC" id="2.8.2.29" evidence="1"/>
<dbReference type="EMBL" id="AK032292">
    <property type="protein sequence ID" value="BAC27796.1"/>
    <property type="molecule type" value="mRNA"/>
</dbReference>
<dbReference type="EMBL" id="AK043969">
    <property type="protein sequence ID" value="BAC31718.1"/>
    <property type="molecule type" value="mRNA"/>
</dbReference>
<dbReference type="EMBL" id="AC098715">
    <property type="status" value="NOT_ANNOTATED_CDS"/>
    <property type="molecule type" value="Genomic_DNA"/>
</dbReference>
<dbReference type="EMBL" id="AC125331">
    <property type="status" value="NOT_ANNOTATED_CDS"/>
    <property type="molecule type" value="Genomic_DNA"/>
</dbReference>
<dbReference type="EMBL" id="AY533705">
    <property type="protein sequence ID" value="AAT01565.1"/>
    <property type="molecule type" value="mRNA"/>
</dbReference>
<dbReference type="CCDS" id="CCDS40115.1">
    <molecule id="Q673U1-1"/>
</dbReference>
<dbReference type="RefSeq" id="NP_001074796.1">
    <molecule id="Q673U1-1"/>
    <property type="nucleotide sequence ID" value="NM_001081327.2"/>
</dbReference>
<dbReference type="SMR" id="Q673U1"/>
<dbReference type="FunCoup" id="Q673U1">
    <property type="interactions" value="29"/>
</dbReference>
<dbReference type="STRING" id="10090.ENSMUSP00000081678"/>
<dbReference type="GlyCosmos" id="Q673U1">
    <property type="glycosylation" value="4 sites, No reported glycans"/>
</dbReference>
<dbReference type="GlyGen" id="Q673U1">
    <property type="glycosylation" value="5 sites, 1 N-linked glycan (1 site)"/>
</dbReference>
<dbReference type="iPTMnet" id="Q673U1"/>
<dbReference type="PhosphoSitePlus" id="Q673U1"/>
<dbReference type="PaxDb" id="10090-ENSMUSP00000081678"/>
<dbReference type="ProteomicsDB" id="267062">
    <molecule id="Q673U1-1"/>
</dbReference>
<dbReference type="ProteomicsDB" id="267063">
    <molecule id="Q673U1-2"/>
</dbReference>
<dbReference type="Antibodypedia" id="2393">
    <property type="antibodies" value="95 antibodies from 16 providers"/>
</dbReference>
<dbReference type="DNASU" id="195646"/>
<dbReference type="Ensembl" id="ENSMUST00000084628.5">
    <molecule id="Q673U1-1"/>
    <property type="protein sequence ID" value="ENSMUSP00000081678.4"/>
    <property type="gene ID" value="ENSMUSG00000046321.9"/>
</dbReference>
<dbReference type="Ensembl" id="ENSMUST00000206880.2">
    <molecule id="Q673U1-2"/>
    <property type="protein sequence ID" value="ENSMUSP00000146027.2"/>
    <property type="gene ID" value="ENSMUSG00000046321.9"/>
</dbReference>
<dbReference type="GeneID" id="195646"/>
<dbReference type="KEGG" id="mmu:195646"/>
<dbReference type="UCSC" id="uc009jnq.1">
    <molecule id="Q673U1-2"/>
    <property type="organism name" value="mouse"/>
</dbReference>
<dbReference type="UCSC" id="uc009jnr.1">
    <molecule id="Q673U1-1"/>
    <property type="organism name" value="mouse"/>
</dbReference>
<dbReference type="AGR" id="MGI:1333802"/>
<dbReference type="CTD" id="9956"/>
<dbReference type="MGI" id="MGI:1333802">
    <property type="gene designation" value="Hs3st2"/>
</dbReference>
<dbReference type="VEuPathDB" id="HostDB:ENSMUSG00000046321"/>
<dbReference type="eggNOG" id="KOG3704">
    <property type="taxonomic scope" value="Eukaryota"/>
</dbReference>
<dbReference type="GeneTree" id="ENSGT00940000160498"/>
<dbReference type="HOGENOM" id="CLU_017703_0_1_1"/>
<dbReference type="InParanoid" id="Q673U1"/>
<dbReference type="OMA" id="NIIFYRG"/>
<dbReference type="OrthoDB" id="411451at2759"/>
<dbReference type="PhylomeDB" id="Q673U1"/>
<dbReference type="TreeFam" id="TF350755"/>
<dbReference type="Reactome" id="R-MMU-2022928">
    <property type="pathway name" value="HS-GAG biosynthesis"/>
</dbReference>
<dbReference type="BioGRID-ORCS" id="195646">
    <property type="hits" value="2 hits in 76 CRISPR screens"/>
</dbReference>
<dbReference type="PRO" id="PR:Q673U1"/>
<dbReference type="Proteomes" id="UP000000589">
    <property type="component" value="Chromosome 7"/>
</dbReference>
<dbReference type="RNAct" id="Q673U1">
    <property type="molecule type" value="protein"/>
</dbReference>
<dbReference type="Bgee" id="ENSMUSG00000046321">
    <property type="expression patterns" value="Expressed in lumbar dorsal root ganglion and 95 other cell types or tissues"/>
</dbReference>
<dbReference type="GO" id="GO:0000139">
    <property type="term" value="C:Golgi membrane"/>
    <property type="evidence" value="ECO:0007669"/>
    <property type="project" value="UniProtKB-SubCell"/>
</dbReference>
<dbReference type="GO" id="GO:0008467">
    <property type="term" value="F:[heparan sulfate]-glucosamine 3-sulfotransferase activity"/>
    <property type="evidence" value="ECO:0000250"/>
    <property type="project" value="UniProtKB"/>
</dbReference>
<dbReference type="GO" id="GO:0007623">
    <property type="term" value="P:circadian rhythm"/>
    <property type="evidence" value="ECO:0007669"/>
    <property type="project" value="Ensembl"/>
</dbReference>
<dbReference type="GO" id="GO:0006024">
    <property type="term" value="P:glycosaminoglycan biosynthetic process"/>
    <property type="evidence" value="ECO:0000250"/>
    <property type="project" value="UniProtKB"/>
</dbReference>
<dbReference type="GO" id="GO:0015012">
    <property type="term" value="P:heparan sulfate proteoglycan biosynthetic process"/>
    <property type="evidence" value="ECO:0000315"/>
    <property type="project" value="MGI"/>
</dbReference>
<dbReference type="FunFam" id="3.40.50.300:FF:000194">
    <property type="entry name" value="Sulfotransferase"/>
    <property type="match status" value="1"/>
</dbReference>
<dbReference type="Gene3D" id="3.40.50.300">
    <property type="entry name" value="P-loop containing nucleotide triphosphate hydrolases"/>
    <property type="match status" value="1"/>
</dbReference>
<dbReference type="InterPro" id="IPR037359">
    <property type="entry name" value="NST/OST"/>
</dbReference>
<dbReference type="InterPro" id="IPR027417">
    <property type="entry name" value="P-loop_NTPase"/>
</dbReference>
<dbReference type="InterPro" id="IPR000863">
    <property type="entry name" value="Sulfotransferase_dom"/>
</dbReference>
<dbReference type="PANTHER" id="PTHR10605:SF10">
    <property type="entry name" value="HEPARAN SULFATE GLUCOSAMINE 3-O-SULFOTRANSFERASE 2"/>
    <property type="match status" value="1"/>
</dbReference>
<dbReference type="PANTHER" id="PTHR10605">
    <property type="entry name" value="HEPARAN SULFATE SULFOTRANSFERASE"/>
    <property type="match status" value="1"/>
</dbReference>
<dbReference type="Pfam" id="PF00685">
    <property type="entry name" value="Sulfotransfer_1"/>
    <property type="match status" value="1"/>
</dbReference>
<dbReference type="SUPFAM" id="SSF52540">
    <property type="entry name" value="P-loop containing nucleoside triphosphate hydrolases"/>
    <property type="match status" value="1"/>
</dbReference>
<proteinExistence type="evidence at transcript level"/>
<feature type="chain" id="PRO_0000085215" description="Heparan sulfate glucosamine 3-O-sulfotransferase 2">
    <location>
        <begin position="1"/>
        <end position="367"/>
    </location>
</feature>
<feature type="topological domain" description="Cytoplasmic" evidence="3">
    <location>
        <begin position="1"/>
        <end position="19"/>
    </location>
</feature>
<feature type="transmembrane region" description="Helical; Signal-anchor for type II membrane protein" evidence="3">
    <location>
        <begin position="20"/>
        <end position="39"/>
    </location>
</feature>
<feature type="topological domain" description="Lumenal" evidence="3">
    <location>
        <begin position="40"/>
        <end position="367"/>
    </location>
</feature>
<feature type="region of interest" description="Disordered" evidence="4">
    <location>
        <begin position="66"/>
        <end position="115"/>
    </location>
</feature>
<feature type="compositionally biased region" description="Pro residues" evidence="4">
    <location>
        <begin position="73"/>
        <end position="83"/>
    </location>
</feature>
<feature type="compositionally biased region" description="Low complexity" evidence="4">
    <location>
        <begin position="84"/>
        <end position="96"/>
    </location>
</feature>
<feature type="binding site" evidence="2">
    <location>
        <begin position="124"/>
        <end position="128"/>
    </location>
    <ligand>
        <name>3'-phosphoadenylyl sulfate</name>
        <dbReference type="ChEBI" id="CHEBI:58339"/>
    </ligand>
</feature>
<feature type="binding site" evidence="2">
    <location>
        <begin position="146"/>
        <end position="152"/>
    </location>
    <ligand>
        <name>substrate</name>
    </ligand>
</feature>
<feature type="binding site" evidence="2">
    <location>
        <begin position="177"/>
        <end position="180"/>
    </location>
    <ligand>
        <name>substrate</name>
    </ligand>
</feature>
<feature type="binding site" evidence="2">
    <location>
        <position position="205"/>
    </location>
    <ligand>
        <name>3'-phosphoadenylyl sulfate</name>
        <dbReference type="ChEBI" id="CHEBI:58339"/>
    </ligand>
</feature>
<feature type="binding site" evidence="2">
    <location>
        <position position="213"/>
    </location>
    <ligand>
        <name>3'-phosphoadenylyl sulfate</name>
        <dbReference type="ChEBI" id="CHEBI:58339"/>
    </ligand>
</feature>
<feature type="binding site" evidence="2">
    <location>
        <begin position="245"/>
        <end position="246"/>
    </location>
    <ligand>
        <name>substrate</name>
    </ligand>
</feature>
<feature type="binding site" evidence="2">
    <location>
        <begin position="330"/>
        <end position="334"/>
    </location>
    <ligand>
        <name>3'-phosphoadenylyl sulfate</name>
        <dbReference type="ChEBI" id="CHEBI:58339"/>
    </ligand>
</feature>
<feature type="glycosylation site" description="N-linked (GlcNAc...) asparagine" evidence="3">
    <location>
        <position position="102"/>
    </location>
</feature>
<feature type="glycosylation site" description="N-linked (GlcNAc...) asparagine" evidence="3">
    <location>
        <position position="193"/>
    </location>
</feature>
<feature type="glycosylation site" description="N-linked (GlcNAc...) asparagine" evidence="3">
    <location>
        <position position="235"/>
    </location>
</feature>
<feature type="glycosylation site" description="N-linked (GlcNAc...) asparagine" evidence="3">
    <location>
        <position position="306"/>
    </location>
</feature>
<feature type="disulfide bond" evidence="2">
    <location>
        <begin position="313"/>
        <end position="325"/>
    </location>
</feature>
<feature type="splice variant" id="VSP_013179" description="In isoform 2." evidence="5">
    <location>
        <begin position="1"/>
        <end position="33"/>
    </location>
</feature>
<feature type="splice variant" id="VSP_013180" description="In isoform 2." evidence="5">
    <original>CYS</original>
    <variation>MCG</variation>
    <location>
        <begin position="34"/>
        <end position="36"/>
    </location>
</feature>
<feature type="splice variant" id="VSP_013181" description="In isoform 2." evidence="5">
    <original>RSLMPRTLETQITLEKTPSYFVTQEAPRRIFNMSRDTKLIVVVRNPVT</original>
    <variation>SVGVFLGLCKTSRNRICPRGNALSKTERGKHRMKSITLSSSWKSVTHL</variation>
    <location>
        <begin position="162"/>
        <end position="209"/>
    </location>
</feature>
<feature type="splice variant" id="VSP_013182" description="In isoform 2." evidence="5">
    <location>
        <begin position="210"/>
        <end position="367"/>
    </location>
</feature>
<name>HS3S2_MOUSE</name>
<sequence length="367" mass="41378">MAYRVLGRAGPPQPRRARRLLFAFTLSLSCTYLCYSFLCCCDGLGQSRLLGAPRCLRGPSASGQKLLAKSRPCDPPGPTPSEPSAPSAPAAAAPAPRLSGSNHSGSPKPGTKRLPQALIVGVKKGGTRAVLEFIRVHPDVRALGTEPHFFDRNYGRGLDWYRSLMPRTLETQITLEKTPSYFVTQEAPRRIFNMSRDTKLIVVVRNPVTRAISDYTQTLSKKPDIPTFEGLSFRNRSLGLVDVSWNAIRIGMYALHLESWLRYFPLAQIHFVSGERLITDPAGEMGRIQDFLGIKRFITDKHFYFNKTKGFPCLKKPESTLLPRCLGKSKGRTHVQIDPEVIDQLREFYRPYNIKFYETVGQDFRWE</sequence>